<feature type="chain" id="PRO_0000322006" description="C4-dicarboxylate transport protein">
    <location>
        <begin position="1"/>
        <end position="446"/>
    </location>
</feature>
<feature type="transmembrane region" description="Helical" evidence="1">
    <location>
        <begin position="25"/>
        <end position="45"/>
    </location>
</feature>
<feature type="transmembrane region" description="Helical" evidence="1">
    <location>
        <begin position="58"/>
        <end position="78"/>
    </location>
</feature>
<feature type="transmembrane region" description="Helical" evidence="1">
    <location>
        <begin position="93"/>
        <end position="113"/>
    </location>
</feature>
<feature type="transmembrane region" description="Helical" evidence="1">
    <location>
        <begin position="159"/>
        <end position="179"/>
    </location>
</feature>
<feature type="transmembrane region" description="Helical" evidence="1">
    <location>
        <begin position="199"/>
        <end position="219"/>
    </location>
</feature>
<feature type="transmembrane region" description="Helical" evidence="1">
    <location>
        <begin position="236"/>
        <end position="256"/>
    </location>
</feature>
<feature type="transmembrane region" description="Helical" evidence="1">
    <location>
        <begin position="322"/>
        <end position="342"/>
    </location>
</feature>
<feature type="transmembrane region" description="Helical" evidence="1">
    <location>
        <begin position="370"/>
        <end position="390"/>
    </location>
</feature>
<feature type="transmembrane region" description="Helical" evidence="1">
    <location>
        <begin position="400"/>
        <end position="420"/>
    </location>
</feature>
<keyword id="KW-0997">Cell inner membrane</keyword>
<keyword id="KW-1003">Cell membrane</keyword>
<keyword id="KW-0472">Membrane</keyword>
<keyword id="KW-1185">Reference proteome</keyword>
<keyword id="KW-0769">Symport</keyword>
<keyword id="KW-0812">Transmembrane</keyword>
<keyword id="KW-1133">Transmembrane helix</keyword>
<keyword id="KW-0813">Transport</keyword>
<reference key="1">
    <citation type="journal article" date="2009" name="Proc. Natl. Acad. Sci. U.S.A.">
        <title>The genomic basis of trophic strategy in marine bacteria.</title>
        <authorList>
            <person name="Lauro F.M."/>
            <person name="McDougald D."/>
            <person name="Thomas T."/>
            <person name="Williams T.J."/>
            <person name="Egan S."/>
            <person name="Rice S."/>
            <person name="DeMaere M.Z."/>
            <person name="Ting L."/>
            <person name="Ertan H."/>
            <person name="Johnson J."/>
            <person name="Ferriera S."/>
            <person name="Lapidus A."/>
            <person name="Anderson I."/>
            <person name="Kyrpides N."/>
            <person name="Munk A.C."/>
            <person name="Detter C."/>
            <person name="Han C.S."/>
            <person name="Brown M.V."/>
            <person name="Robb F.T."/>
            <person name="Kjelleberg S."/>
            <person name="Cavicchioli R."/>
        </authorList>
    </citation>
    <scope>NUCLEOTIDE SEQUENCE [LARGE SCALE GENOMIC DNA]</scope>
    <source>
        <strain>DSM 13593 / LMG 18877 / RB2256</strain>
    </source>
</reference>
<evidence type="ECO:0000255" key="1">
    <source>
        <dbReference type="HAMAP-Rule" id="MF_01300"/>
    </source>
</evidence>
<dbReference type="EMBL" id="CP000356">
    <property type="protein sequence ID" value="ABF53169.1"/>
    <property type="molecule type" value="Genomic_DNA"/>
</dbReference>
<dbReference type="SMR" id="Q1GT53"/>
<dbReference type="STRING" id="317655.Sala_1456"/>
<dbReference type="KEGG" id="sal:Sala_1456"/>
<dbReference type="eggNOG" id="COG1301">
    <property type="taxonomic scope" value="Bacteria"/>
</dbReference>
<dbReference type="HOGENOM" id="CLU_019375_7_0_5"/>
<dbReference type="Proteomes" id="UP000006578">
    <property type="component" value="Chromosome"/>
</dbReference>
<dbReference type="GO" id="GO:0005886">
    <property type="term" value="C:plasma membrane"/>
    <property type="evidence" value="ECO:0007669"/>
    <property type="project" value="UniProtKB-SubCell"/>
</dbReference>
<dbReference type="GO" id="GO:0015138">
    <property type="term" value="F:fumarate transmembrane transporter activity"/>
    <property type="evidence" value="ECO:0007669"/>
    <property type="project" value="TreeGrafter"/>
</dbReference>
<dbReference type="GO" id="GO:0015366">
    <property type="term" value="F:malate:proton symporter activity"/>
    <property type="evidence" value="ECO:0007669"/>
    <property type="project" value="TreeGrafter"/>
</dbReference>
<dbReference type="GO" id="GO:0015141">
    <property type="term" value="F:succinate transmembrane transporter activity"/>
    <property type="evidence" value="ECO:0007669"/>
    <property type="project" value="TreeGrafter"/>
</dbReference>
<dbReference type="GO" id="GO:0070778">
    <property type="term" value="P:L-aspartate transmembrane transport"/>
    <property type="evidence" value="ECO:0007669"/>
    <property type="project" value="TreeGrafter"/>
</dbReference>
<dbReference type="FunFam" id="1.10.3860.10:FF:000001">
    <property type="entry name" value="C4-dicarboxylate transport protein"/>
    <property type="match status" value="1"/>
</dbReference>
<dbReference type="Gene3D" id="1.10.3860.10">
    <property type="entry name" value="Sodium:dicarboxylate symporter"/>
    <property type="match status" value="1"/>
</dbReference>
<dbReference type="HAMAP" id="MF_01300">
    <property type="entry name" value="C4_dicarb_transport"/>
    <property type="match status" value="1"/>
</dbReference>
<dbReference type="InterPro" id="IPR023954">
    <property type="entry name" value="C4_dicarb_transport"/>
</dbReference>
<dbReference type="InterPro" id="IPR001991">
    <property type="entry name" value="Na-dicarboxylate_symporter"/>
</dbReference>
<dbReference type="InterPro" id="IPR018107">
    <property type="entry name" value="Na-dicarboxylate_symporter_CS"/>
</dbReference>
<dbReference type="InterPro" id="IPR036458">
    <property type="entry name" value="Na:dicarbo_symporter_sf"/>
</dbReference>
<dbReference type="NCBIfam" id="NF002461">
    <property type="entry name" value="PRK01663.1"/>
    <property type="match status" value="1"/>
</dbReference>
<dbReference type="PANTHER" id="PTHR42865:SF1">
    <property type="entry name" value="AEROBIC C4-DICARBOXYLATE TRANSPORT PROTEIN"/>
    <property type="match status" value="1"/>
</dbReference>
<dbReference type="PANTHER" id="PTHR42865">
    <property type="entry name" value="PROTON/GLUTAMATE-ASPARTATE SYMPORTER"/>
    <property type="match status" value="1"/>
</dbReference>
<dbReference type="Pfam" id="PF00375">
    <property type="entry name" value="SDF"/>
    <property type="match status" value="1"/>
</dbReference>
<dbReference type="PRINTS" id="PR00173">
    <property type="entry name" value="EDTRNSPORT"/>
</dbReference>
<dbReference type="SUPFAM" id="SSF118215">
    <property type="entry name" value="Proton glutamate symport protein"/>
    <property type="match status" value="1"/>
</dbReference>
<dbReference type="PROSITE" id="PS00713">
    <property type="entry name" value="NA_DICARBOXYL_SYMP_1"/>
    <property type="match status" value="1"/>
</dbReference>
<dbReference type="PROSITE" id="PS00714">
    <property type="entry name" value="NA_DICARBOXYL_SYMP_2"/>
    <property type="match status" value="1"/>
</dbReference>
<comment type="function">
    <text evidence="1">Responsible for the transport of dicarboxylates such as succinate, fumarate, and malate from the periplasm across the membrane.</text>
</comment>
<comment type="subcellular location">
    <subcellularLocation>
        <location evidence="1">Cell inner membrane</location>
        <topology evidence="1">Multi-pass membrane protein</topology>
    </subcellularLocation>
</comment>
<comment type="similarity">
    <text evidence="1">Belongs to the dicarboxylate/amino acid:cation symporter (DAACS) (TC 2.A.23) family.</text>
</comment>
<gene>
    <name evidence="1" type="primary">dctA</name>
    <name type="ordered locus">Sala_1456</name>
</gene>
<organism>
    <name type="scientific">Sphingopyxis alaskensis (strain DSM 13593 / LMG 18877 / RB2256)</name>
    <name type="common">Sphingomonas alaskensis</name>
    <dbReference type="NCBI Taxonomy" id="317655"/>
    <lineage>
        <taxon>Bacteria</taxon>
        <taxon>Pseudomonadati</taxon>
        <taxon>Pseudomonadota</taxon>
        <taxon>Alphaproteobacteria</taxon>
        <taxon>Sphingomonadales</taxon>
        <taxon>Sphingomonadaceae</taxon>
        <taxon>Sphingopyxis</taxon>
    </lineage>
</organism>
<accession>Q1GT53</accession>
<proteinExistence type="inferred from homology"/>
<name>DCTA_SPHAL</name>
<sequence length="446" mass="46072">MAANVNVMAAPTPARPRAWWSHLYVQVLAAIVAGVLLGHFWPAIGTELKPLGDGFIKLVKMIIAPVIFLTVATGIASIGGETKALGRVVGKAFAYFLFFSTLALIVGLVVANVVQPGAGMNIDPATLDAGAVAQYQAKAHEATLTAFLLDIIPVTFVSALTEGSILQALFVAILFGLALSHAGEPGRQVLGLLEKVSTVFFGLVGMLMKFAPIGAFGAMAFTIGKYGVESLANLGLLIATFYLTSLFFVIVILGAVAHFSGFSIFRLIAYLKAELLLVLGTSSSEAALPSLIEKLEKAGCAKPIVGLVVPTGYSFNLDGTNIYMTLAALFIAQAVGVDLSLGDQIALLLVAMVSSKGAAGVTGAGFITLAATLSIVPSVPVAGLALILGIDRFMSECRALTNFIGNALAAIVVAGWEKGLDREALARALAGEPAPLAAAPIETDTD</sequence>
<protein>
    <recommendedName>
        <fullName evidence="1">C4-dicarboxylate transport protein</fullName>
    </recommendedName>
</protein>